<feature type="chain" id="PRO_1000083209" description="Glycine dehydrogenase (decarboxylating)">
    <location>
        <begin position="1"/>
        <end position="952"/>
    </location>
</feature>
<feature type="modified residue" description="N6-(pyridoxal phosphate)lysine" evidence="1">
    <location>
        <position position="703"/>
    </location>
</feature>
<gene>
    <name evidence="1" type="primary">gcvP</name>
    <name type="ordered locus">Mflv_3398</name>
</gene>
<name>GCSP_MYCGI</name>
<dbReference type="EC" id="1.4.4.2" evidence="1"/>
<dbReference type="EMBL" id="CP000656">
    <property type="protein sequence ID" value="ABP45874.1"/>
    <property type="molecule type" value="Genomic_DNA"/>
</dbReference>
<dbReference type="SMR" id="A4TA90"/>
<dbReference type="STRING" id="350054.Mflv_3398"/>
<dbReference type="KEGG" id="mgi:Mflv_3398"/>
<dbReference type="eggNOG" id="COG0403">
    <property type="taxonomic scope" value="Bacteria"/>
</dbReference>
<dbReference type="eggNOG" id="COG1003">
    <property type="taxonomic scope" value="Bacteria"/>
</dbReference>
<dbReference type="HOGENOM" id="CLU_004620_2_1_11"/>
<dbReference type="OrthoDB" id="9801272at2"/>
<dbReference type="GO" id="GO:0005829">
    <property type="term" value="C:cytosol"/>
    <property type="evidence" value="ECO:0007669"/>
    <property type="project" value="TreeGrafter"/>
</dbReference>
<dbReference type="GO" id="GO:0005960">
    <property type="term" value="C:glycine cleavage complex"/>
    <property type="evidence" value="ECO:0007669"/>
    <property type="project" value="TreeGrafter"/>
</dbReference>
<dbReference type="GO" id="GO:0016594">
    <property type="term" value="F:glycine binding"/>
    <property type="evidence" value="ECO:0007669"/>
    <property type="project" value="TreeGrafter"/>
</dbReference>
<dbReference type="GO" id="GO:0004375">
    <property type="term" value="F:glycine dehydrogenase (decarboxylating) activity"/>
    <property type="evidence" value="ECO:0007669"/>
    <property type="project" value="UniProtKB-EC"/>
</dbReference>
<dbReference type="GO" id="GO:0030170">
    <property type="term" value="F:pyridoxal phosphate binding"/>
    <property type="evidence" value="ECO:0007669"/>
    <property type="project" value="TreeGrafter"/>
</dbReference>
<dbReference type="GO" id="GO:0019464">
    <property type="term" value="P:glycine decarboxylation via glycine cleavage system"/>
    <property type="evidence" value="ECO:0007669"/>
    <property type="project" value="UniProtKB-UniRule"/>
</dbReference>
<dbReference type="CDD" id="cd00613">
    <property type="entry name" value="GDC-P"/>
    <property type="match status" value="2"/>
</dbReference>
<dbReference type="FunFam" id="3.90.1150.10:FF:000059">
    <property type="entry name" value="Glycine dehydrogenase (decarboxylating)"/>
    <property type="match status" value="1"/>
</dbReference>
<dbReference type="FunFam" id="3.40.640.10:FF:000005">
    <property type="entry name" value="Glycine dehydrogenase (decarboxylating), mitochondrial"/>
    <property type="match status" value="1"/>
</dbReference>
<dbReference type="FunFam" id="3.40.640.10:FF:000007">
    <property type="entry name" value="glycine dehydrogenase (Decarboxylating), mitochondrial"/>
    <property type="match status" value="1"/>
</dbReference>
<dbReference type="Gene3D" id="3.90.1150.10">
    <property type="entry name" value="Aspartate Aminotransferase, domain 1"/>
    <property type="match status" value="2"/>
</dbReference>
<dbReference type="Gene3D" id="3.40.640.10">
    <property type="entry name" value="Type I PLP-dependent aspartate aminotransferase-like (Major domain)"/>
    <property type="match status" value="2"/>
</dbReference>
<dbReference type="HAMAP" id="MF_00711">
    <property type="entry name" value="GcvP"/>
    <property type="match status" value="1"/>
</dbReference>
<dbReference type="InterPro" id="IPR003437">
    <property type="entry name" value="GcvP"/>
</dbReference>
<dbReference type="InterPro" id="IPR049316">
    <property type="entry name" value="GDC-P_C"/>
</dbReference>
<dbReference type="InterPro" id="IPR049315">
    <property type="entry name" value="GDC-P_N"/>
</dbReference>
<dbReference type="InterPro" id="IPR020581">
    <property type="entry name" value="GDC_P"/>
</dbReference>
<dbReference type="InterPro" id="IPR015424">
    <property type="entry name" value="PyrdxlP-dep_Trfase"/>
</dbReference>
<dbReference type="InterPro" id="IPR015421">
    <property type="entry name" value="PyrdxlP-dep_Trfase_major"/>
</dbReference>
<dbReference type="InterPro" id="IPR015422">
    <property type="entry name" value="PyrdxlP-dep_Trfase_small"/>
</dbReference>
<dbReference type="NCBIfam" id="TIGR00461">
    <property type="entry name" value="gcvP"/>
    <property type="match status" value="1"/>
</dbReference>
<dbReference type="PANTHER" id="PTHR11773:SF1">
    <property type="entry name" value="GLYCINE DEHYDROGENASE (DECARBOXYLATING), MITOCHONDRIAL"/>
    <property type="match status" value="1"/>
</dbReference>
<dbReference type="PANTHER" id="PTHR11773">
    <property type="entry name" value="GLYCINE DEHYDROGENASE, DECARBOXYLATING"/>
    <property type="match status" value="1"/>
</dbReference>
<dbReference type="Pfam" id="PF21478">
    <property type="entry name" value="GcvP2_C"/>
    <property type="match status" value="1"/>
</dbReference>
<dbReference type="Pfam" id="PF02347">
    <property type="entry name" value="GDC-P"/>
    <property type="match status" value="2"/>
</dbReference>
<dbReference type="SUPFAM" id="SSF53383">
    <property type="entry name" value="PLP-dependent transferases"/>
    <property type="match status" value="2"/>
</dbReference>
<sequence length="952" mass="100876">MPDQTPAPSVLRFVDRHIGPDDQAVETLLNTIGVPSLDELAAKALPDVILDRLSTDGVAPGLEHLPAAATEHEALAELRALAQSNTVAVSMIGQGYYDTLTPPVLRRNIIENPAWYTAYTPYQPEISQGRLEALLNFQTMVTDLTGLEVANASMLDEGTAAAEAMTLMHRAVRGPATRLAVDADVYPQTAAILATRAEPLGIEIVTADLRQGLPDGDFFGVIVQLPGASGVVHDWSALVEQAHERGALVAVGADLLAATMITPPGEIGADVAFGTTQRFGVPMGFGGPHAGYLAVHSKHARQLPGRLVGVSVDADGSRAYRLALQTREQHIRRDKATSNICTAQVLLAVLAAMYASYHGPDGLRGIAQRVHGHARALAAGLADAGVEVVHDSFFDTVLAHVPGRADEVRAAAKERGINVWAVDADHVSVACDEATTAEHVADVLAAFGAAPSGADFAGPAVATRTSEFLTHPAFSDYRTETSMMRYLRSLADKDIALDRSMIPLGSCTMKLNAAAEMEAITWAEFGRQHPFAPASDTPGLRRLIADLQSWLTGITGYDEISLQPNAGSQGEYAGLLAIQAYHHARGDSGRTVCLIPSSAHGTNAASAAMVGMKVVVVACRANGDVDLDDLRAKVTEHADRLSALMITYPSTHGVYEHDIADICAAVHDAGGQVYVDGANLNALVGLARPGRFGGDVSHLNLHKTFCIPHGGGGPGVGPVAVRAHLAPYLPGHPLAAELSDDHTVSAAPYGSASILPITWAYIRMMGAAGLRSATLVAIASANYIARRLDEYYPVLYTGENGMVAHECILDLRGITKATGVTVDDVAKRLADYGFHAPTMSFPVAGTLMVEPTESESLSEIDAFCDAMIAIRAEIDRVGSGEWPVDDNPLRGAPHTAESLLVEEWTHPYTREQAAYPLGKGFRPKVWPPVRRIDGAYGDRNLVCSCPPVEAFA</sequence>
<protein>
    <recommendedName>
        <fullName evidence="1">Glycine dehydrogenase (decarboxylating)</fullName>
        <ecNumber evidence="1">1.4.4.2</ecNumber>
    </recommendedName>
    <alternativeName>
        <fullName evidence="1">Glycine cleavage system P-protein</fullName>
    </alternativeName>
    <alternativeName>
        <fullName evidence="1">Glycine decarboxylase</fullName>
    </alternativeName>
    <alternativeName>
        <fullName evidence="1">Glycine dehydrogenase (aminomethyl-transferring)</fullName>
    </alternativeName>
</protein>
<comment type="function">
    <text evidence="1">The glycine cleavage system catalyzes the degradation of glycine. The P protein binds the alpha-amino group of glycine through its pyridoxal phosphate cofactor; CO(2) is released and the remaining methylamine moiety is then transferred to the lipoamide cofactor of the H protein.</text>
</comment>
<comment type="catalytic activity">
    <reaction evidence="1">
        <text>N(6)-[(R)-lipoyl]-L-lysyl-[glycine-cleavage complex H protein] + glycine + H(+) = N(6)-[(R)-S(8)-aminomethyldihydrolipoyl]-L-lysyl-[glycine-cleavage complex H protein] + CO2</text>
        <dbReference type="Rhea" id="RHEA:24304"/>
        <dbReference type="Rhea" id="RHEA-COMP:10494"/>
        <dbReference type="Rhea" id="RHEA-COMP:10495"/>
        <dbReference type="ChEBI" id="CHEBI:15378"/>
        <dbReference type="ChEBI" id="CHEBI:16526"/>
        <dbReference type="ChEBI" id="CHEBI:57305"/>
        <dbReference type="ChEBI" id="CHEBI:83099"/>
        <dbReference type="ChEBI" id="CHEBI:83143"/>
        <dbReference type="EC" id="1.4.4.2"/>
    </reaction>
</comment>
<comment type="cofactor">
    <cofactor evidence="1">
        <name>pyridoxal 5'-phosphate</name>
        <dbReference type="ChEBI" id="CHEBI:597326"/>
    </cofactor>
</comment>
<comment type="subunit">
    <text evidence="1">The glycine cleavage system is composed of four proteins: P, T, L and H.</text>
</comment>
<comment type="similarity">
    <text evidence="1">Belongs to the GcvP family.</text>
</comment>
<organism>
    <name type="scientific">Mycolicibacterium gilvum (strain PYR-GCK)</name>
    <name type="common">Mycobacterium gilvum (strain PYR-GCK)</name>
    <dbReference type="NCBI Taxonomy" id="350054"/>
    <lineage>
        <taxon>Bacteria</taxon>
        <taxon>Bacillati</taxon>
        <taxon>Actinomycetota</taxon>
        <taxon>Actinomycetes</taxon>
        <taxon>Mycobacteriales</taxon>
        <taxon>Mycobacteriaceae</taxon>
        <taxon>Mycolicibacterium</taxon>
    </lineage>
</organism>
<proteinExistence type="inferred from homology"/>
<accession>A4TA90</accession>
<evidence type="ECO:0000255" key="1">
    <source>
        <dbReference type="HAMAP-Rule" id="MF_00711"/>
    </source>
</evidence>
<keyword id="KW-0560">Oxidoreductase</keyword>
<keyword id="KW-0663">Pyridoxal phosphate</keyword>
<reference key="1">
    <citation type="submission" date="2007-04" db="EMBL/GenBank/DDBJ databases">
        <title>Complete sequence of chromosome of Mycobacterium gilvum PYR-GCK.</title>
        <authorList>
            <consortium name="US DOE Joint Genome Institute"/>
            <person name="Copeland A."/>
            <person name="Lucas S."/>
            <person name="Lapidus A."/>
            <person name="Barry K."/>
            <person name="Detter J.C."/>
            <person name="Glavina del Rio T."/>
            <person name="Hammon N."/>
            <person name="Israni S."/>
            <person name="Dalin E."/>
            <person name="Tice H."/>
            <person name="Pitluck S."/>
            <person name="Chain P."/>
            <person name="Malfatti S."/>
            <person name="Shin M."/>
            <person name="Vergez L."/>
            <person name="Schmutz J."/>
            <person name="Larimer F."/>
            <person name="Land M."/>
            <person name="Hauser L."/>
            <person name="Kyrpides N."/>
            <person name="Mikhailova N."/>
            <person name="Miller C."/>
            <person name="Richardson P."/>
        </authorList>
    </citation>
    <scope>NUCLEOTIDE SEQUENCE [LARGE SCALE GENOMIC DNA]</scope>
    <source>
        <strain>PYR-GCK</strain>
    </source>
</reference>